<protein>
    <recommendedName>
        <fullName evidence="3">Hydroxypyruvate/pyruvate aldolase</fullName>
        <shortName evidence="3">HPA/PA aldolase</shortName>
        <ecNumber evidence="2">4.1.2.-</ecNumber>
    </recommendedName>
</protein>
<keyword id="KW-0456">Lyase</keyword>
<keyword id="KW-0479">Metal-binding</keyword>
<keyword id="KW-0670">Pyruvate</keyword>
<keyword id="KW-1185">Reference proteome</keyword>
<dbReference type="EC" id="4.1.2.-" evidence="2"/>
<dbReference type="EMBL" id="AAYA01000004">
    <property type="protein sequence ID" value="EBA08767.1"/>
    <property type="molecule type" value="Genomic_DNA"/>
</dbReference>
<dbReference type="RefSeq" id="WP_005857559.1">
    <property type="nucleotide sequence ID" value="NZ_AAYA01000004.1"/>
</dbReference>
<dbReference type="SMR" id="A3K1H1"/>
<dbReference type="eggNOG" id="COG3836">
    <property type="taxonomic scope" value="Bacteria"/>
</dbReference>
<dbReference type="OrthoDB" id="9802624at2"/>
<dbReference type="Proteomes" id="UP000005713">
    <property type="component" value="Unassembled WGS sequence"/>
</dbReference>
<dbReference type="GO" id="GO:0005737">
    <property type="term" value="C:cytoplasm"/>
    <property type="evidence" value="ECO:0007669"/>
    <property type="project" value="TreeGrafter"/>
</dbReference>
<dbReference type="GO" id="GO:0016832">
    <property type="term" value="F:aldehyde-lyase activity"/>
    <property type="evidence" value="ECO:0007669"/>
    <property type="project" value="TreeGrafter"/>
</dbReference>
<dbReference type="GO" id="GO:0046872">
    <property type="term" value="F:metal ion binding"/>
    <property type="evidence" value="ECO:0007669"/>
    <property type="project" value="UniProtKB-KW"/>
</dbReference>
<dbReference type="FunFam" id="3.20.20.60:FF:000004">
    <property type="entry name" value="5-keto-4-deoxy-D-glucarate aldolase"/>
    <property type="match status" value="1"/>
</dbReference>
<dbReference type="Gene3D" id="3.20.20.60">
    <property type="entry name" value="Phosphoenolpyruvate-binding domains"/>
    <property type="match status" value="1"/>
</dbReference>
<dbReference type="InterPro" id="IPR005000">
    <property type="entry name" value="Aldolase/citrate-lyase_domain"/>
</dbReference>
<dbReference type="InterPro" id="IPR050251">
    <property type="entry name" value="HpcH-HpaI_aldolase"/>
</dbReference>
<dbReference type="InterPro" id="IPR015813">
    <property type="entry name" value="Pyrv/PenolPyrv_kinase-like_dom"/>
</dbReference>
<dbReference type="InterPro" id="IPR040442">
    <property type="entry name" value="Pyrv_kinase-like_dom_sf"/>
</dbReference>
<dbReference type="PANTHER" id="PTHR30502">
    <property type="entry name" value="2-KETO-3-DEOXY-L-RHAMNONATE ALDOLASE"/>
    <property type="match status" value="1"/>
</dbReference>
<dbReference type="PANTHER" id="PTHR30502:SF0">
    <property type="entry name" value="PHOSPHOENOLPYRUVATE CARBOXYLASE FAMILY PROTEIN"/>
    <property type="match status" value="1"/>
</dbReference>
<dbReference type="Pfam" id="PF03328">
    <property type="entry name" value="HpcH_HpaI"/>
    <property type="match status" value="1"/>
</dbReference>
<dbReference type="SUPFAM" id="SSF51621">
    <property type="entry name" value="Phosphoenolpyruvate/pyruvate domain"/>
    <property type="match status" value="1"/>
</dbReference>
<sequence length="253" mass="26854">MDLPKNRFKAALRAGQRQIGLWHTFASADVAELMATCGYDWILMDTEHSPVGPAEALAFLRAVAPYPVTGVVRPGWNDAVEIKKLLDAGAQTLLIPYVQTPDEARAAVAAVTYPPSGIRGVAGVTRATRYGAIANYAERANDEICLLVQVETRDALAQIEEIASVDGVDGVFIGPADLAASFGYPGQPSHPEVKAAILDGFAKLKKLGVPGGILSRDDTLLRASAEAGAQFIAVEIDATMIRTAALARRAEWS</sequence>
<organism>
    <name type="scientific">Sagittula stellata (strain ATCC 700073 / DSM 11524 / E-37)</name>
    <dbReference type="NCBI Taxonomy" id="388399"/>
    <lineage>
        <taxon>Bacteria</taxon>
        <taxon>Pseudomonadati</taxon>
        <taxon>Pseudomonadota</taxon>
        <taxon>Alphaproteobacteria</taxon>
        <taxon>Rhodobacterales</taxon>
        <taxon>Roseobacteraceae</taxon>
        <taxon>Sagittula</taxon>
    </lineage>
</organism>
<comment type="function">
    <text evidence="2">Aldolase which can catalyze in vitro the aldolisation reaction between hydroxypyruvate (HPA) or pyruvate (PA) and D-glyceraldehyde (D-GA) (Ref.2). The condensation of pyruvate and D-glyceraldehyde produces 2-dehydro-3-deoxy-L-galactonate (Ref.2). Has weak activity with hydroxypyruvate and D-glyceraldehyde (Ref.2).</text>
</comment>
<comment type="catalytic activity">
    <reaction evidence="2">
        <text>D-glyceraldehyde + pyruvate = 2-dehydro-3-deoxy-L-galactonate</text>
        <dbReference type="Rhea" id="RHEA:80055"/>
        <dbReference type="ChEBI" id="CHEBI:15361"/>
        <dbReference type="ChEBI" id="CHEBI:17378"/>
        <dbReference type="ChEBI" id="CHEBI:75545"/>
    </reaction>
</comment>
<comment type="cofactor">
    <cofactor evidence="1">
        <name>a divalent metal cation</name>
        <dbReference type="ChEBI" id="CHEBI:60240"/>
    </cofactor>
</comment>
<comment type="similarity">
    <text evidence="4">Belongs to the HpcH/HpaI aldolase family.</text>
</comment>
<feature type="chain" id="PRO_0000460959" description="Hydroxypyruvate/pyruvate aldolase">
    <location>
        <begin position="1"/>
        <end position="253"/>
    </location>
</feature>
<feature type="active site" description="Proton acceptor" evidence="1">
    <location>
        <position position="48"/>
    </location>
</feature>
<feature type="binding site" evidence="1">
    <location>
        <position position="151"/>
    </location>
    <ligand>
        <name>a divalent metal cation</name>
        <dbReference type="ChEBI" id="CHEBI:60240"/>
    </ligand>
</feature>
<feature type="binding site" evidence="1">
    <location>
        <position position="177"/>
    </location>
    <ligand>
        <name>a divalent metal cation</name>
        <dbReference type="ChEBI" id="CHEBI:60240"/>
    </ligand>
</feature>
<feature type="site" description="Transition state stabilizer" evidence="1">
    <location>
        <position position="73"/>
    </location>
</feature>
<feature type="site" description="Increases basicity of active site His" evidence="1">
    <location>
        <position position="87"/>
    </location>
</feature>
<gene>
    <name evidence="5" type="ORF">SSE37_03955</name>
</gene>
<evidence type="ECO:0000250" key="1">
    <source>
        <dbReference type="UniProtKB" id="Q47098"/>
    </source>
</evidence>
<evidence type="ECO:0000269" key="2">
    <source ref="2"/>
</evidence>
<evidence type="ECO:0000303" key="3">
    <source ref="2"/>
</evidence>
<evidence type="ECO:0000305" key="4"/>
<evidence type="ECO:0000312" key="5">
    <source>
        <dbReference type="EMBL" id="EBA08767.1"/>
    </source>
</evidence>
<reference key="1">
    <citation type="submission" date="2006-06" db="EMBL/GenBank/DDBJ databases">
        <authorList>
            <person name="Moran M.A."/>
            <person name="Ferriera S."/>
            <person name="Johnson J."/>
            <person name="Kravitz S."/>
            <person name="Beeson K."/>
            <person name="Sutton G."/>
            <person name="Rogers Y.-H."/>
            <person name="Friedman R."/>
            <person name="Frazier M."/>
            <person name="Venter J.C."/>
        </authorList>
    </citation>
    <scope>NUCLEOTIDE SEQUENCE [LARGE SCALE GENOMIC DNA]</scope>
    <source>
        <strain>ATCC 700073 / DSM 11524 / E-37</strain>
    </source>
</reference>
<reference key="2">
    <citation type="journal article" date="2017" name="Green Chem.">
        <title>Expanding the reaction space of aldolases using hydroxypyruvate as a nucleophilic substrate.</title>
        <authorList>
            <person name="de Berardinis V."/>
            <person name="Guerard-Helaine C."/>
            <person name="Darii E."/>
            <person name="Bastard K."/>
            <person name="Helaine V."/>
            <person name="Mariage A."/>
            <person name="Petit J.-L."/>
            <person name="Poupard N."/>
            <person name="Sanchez-Moreno I."/>
            <person name="Stam M."/>
            <person name="Gefflaut T."/>
            <person name="Salanoubat M."/>
            <person name="Lemaire M."/>
        </authorList>
    </citation>
    <scope>FUNCTION</scope>
    <scope>CATALYTIC ACTIVITY</scope>
</reference>
<name>HPAAL_SAGS3</name>
<proteinExistence type="evidence at protein level"/>
<accession>A3K1H1</accession>